<sequence length="291" mass="30981">MSAPDSRAPLSRPAVAKSWHGRLELGFERHGMRTTLAHRLHDGPLRVQRPLYPEGDAICHAVIVHPPGGVAGGDRLDIDIALGDGTHAVLTTPGATKWYKSNGLDATQRIGITVGEHAKLDWLPQNNLFFDAAHASLDFTVKLGTGATAIGWDASQLGRQAAGETWSAGRVASTSALVDADGRPLWTERALLDAHDPLRGALQGLAGFPAYGTLWAAGAACDAALAESLAARMPFDATLRAGATCVTPGVVLVRALSTSMEALQRHFTDCWLHLRPIVHGVDARPLRLWQT</sequence>
<feature type="chain" id="PRO_0000340441" description="Urease accessory protein UreD">
    <location>
        <begin position="1"/>
        <end position="291"/>
    </location>
</feature>
<name>URED_BURL3</name>
<protein>
    <recommendedName>
        <fullName evidence="1">Urease accessory protein UreD</fullName>
    </recommendedName>
</protein>
<gene>
    <name evidence="1" type="primary">ureD</name>
    <name type="ordered locus">Bcep18194_A4009</name>
</gene>
<organism>
    <name type="scientific">Burkholderia lata (strain ATCC 17760 / DSM 23089 / LMG 22485 / NCIMB 9086 / R18194 / 383)</name>
    <dbReference type="NCBI Taxonomy" id="482957"/>
    <lineage>
        <taxon>Bacteria</taxon>
        <taxon>Pseudomonadati</taxon>
        <taxon>Pseudomonadota</taxon>
        <taxon>Betaproteobacteria</taxon>
        <taxon>Burkholderiales</taxon>
        <taxon>Burkholderiaceae</taxon>
        <taxon>Burkholderia</taxon>
        <taxon>Burkholderia cepacia complex</taxon>
    </lineage>
</organism>
<keyword id="KW-0143">Chaperone</keyword>
<keyword id="KW-0963">Cytoplasm</keyword>
<keyword id="KW-0996">Nickel insertion</keyword>
<proteinExistence type="inferred from homology"/>
<reference key="1">
    <citation type="submission" date="2005-10" db="EMBL/GenBank/DDBJ databases">
        <title>Complete sequence of chromosome 1 of Burkholderia sp. 383.</title>
        <authorList>
            <consortium name="US DOE Joint Genome Institute"/>
            <person name="Copeland A."/>
            <person name="Lucas S."/>
            <person name="Lapidus A."/>
            <person name="Barry K."/>
            <person name="Detter J.C."/>
            <person name="Glavina T."/>
            <person name="Hammon N."/>
            <person name="Israni S."/>
            <person name="Pitluck S."/>
            <person name="Chain P."/>
            <person name="Malfatti S."/>
            <person name="Shin M."/>
            <person name="Vergez L."/>
            <person name="Schmutz J."/>
            <person name="Larimer F."/>
            <person name="Land M."/>
            <person name="Kyrpides N."/>
            <person name="Lykidis A."/>
            <person name="Richardson P."/>
        </authorList>
    </citation>
    <scope>NUCLEOTIDE SEQUENCE [LARGE SCALE GENOMIC DNA]</scope>
    <source>
        <strain>ATCC 17760 / DSM 23089 / LMG 22485 / NCIMB 9086 / R18194 / 383</strain>
    </source>
</reference>
<comment type="function">
    <text evidence="1">Required for maturation of urease via the functional incorporation of the urease nickel metallocenter.</text>
</comment>
<comment type="subunit">
    <text evidence="1">UreD, UreF and UreG form a complex that acts as a GTP-hydrolysis-dependent molecular chaperone, activating the urease apoprotein by helping to assemble the nickel containing metallocenter of UreC. The UreE protein probably delivers the nickel.</text>
</comment>
<comment type="subcellular location">
    <subcellularLocation>
        <location evidence="1">Cytoplasm</location>
    </subcellularLocation>
</comment>
<comment type="similarity">
    <text evidence="1">Belongs to the UreD family.</text>
</comment>
<evidence type="ECO:0000255" key="1">
    <source>
        <dbReference type="HAMAP-Rule" id="MF_01384"/>
    </source>
</evidence>
<dbReference type="EMBL" id="CP000151">
    <property type="protein sequence ID" value="ABB07606.1"/>
    <property type="molecule type" value="Genomic_DNA"/>
</dbReference>
<dbReference type="RefSeq" id="WP_011351187.1">
    <property type="nucleotide sequence ID" value="NC_007510.1"/>
</dbReference>
<dbReference type="SMR" id="Q39IW0"/>
<dbReference type="GeneID" id="45093908"/>
<dbReference type="KEGG" id="bur:Bcep18194_A4009"/>
<dbReference type="PATRIC" id="fig|482957.22.peg.889"/>
<dbReference type="HOGENOM" id="CLU_056339_0_0_4"/>
<dbReference type="Proteomes" id="UP000002705">
    <property type="component" value="Chromosome 1"/>
</dbReference>
<dbReference type="GO" id="GO:0005737">
    <property type="term" value="C:cytoplasm"/>
    <property type="evidence" value="ECO:0007669"/>
    <property type="project" value="UniProtKB-SubCell"/>
</dbReference>
<dbReference type="GO" id="GO:0016151">
    <property type="term" value="F:nickel cation binding"/>
    <property type="evidence" value="ECO:0007669"/>
    <property type="project" value="UniProtKB-UniRule"/>
</dbReference>
<dbReference type="HAMAP" id="MF_01384">
    <property type="entry name" value="UreD"/>
    <property type="match status" value="1"/>
</dbReference>
<dbReference type="InterPro" id="IPR002669">
    <property type="entry name" value="UreD"/>
</dbReference>
<dbReference type="PANTHER" id="PTHR33643">
    <property type="entry name" value="UREASE ACCESSORY PROTEIN D"/>
    <property type="match status" value="1"/>
</dbReference>
<dbReference type="PANTHER" id="PTHR33643:SF1">
    <property type="entry name" value="UREASE ACCESSORY PROTEIN D"/>
    <property type="match status" value="1"/>
</dbReference>
<dbReference type="Pfam" id="PF01774">
    <property type="entry name" value="UreD"/>
    <property type="match status" value="1"/>
</dbReference>
<accession>Q39IW0</accession>